<feature type="chain" id="PRO_0000400183" description="1D-myo-inositol 2-acetamido-2-deoxy-alpha-D-glucopyranoside deacetylase 1">
    <location>
        <begin position="1"/>
        <end position="289"/>
    </location>
</feature>
<feature type="binding site" evidence="1">
    <location>
        <position position="4"/>
    </location>
    <ligand>
        <name>Zn(2+)</name>
        <dbReference type="ChEBI" id="CHEBI:29105"/>
    </ligand>
</feature>
<feature type="binding site" evidence="1">
    <location>
        <position position="7"/>
    </location>
    <ligand>
        <name>Zn(2+)</name>
        <dbReference type="ChEBI" id="CHEBI:29105"/>
    </ligand>
</feature>
<feature type="binding site" evidence="1">
    <location>
        <position position="140"/>
    </location>
    <ligand>
        <name>Zn(2+)</name>
        <dbReference type="ChEBI" id="CHEBI:29105"/>
    </ligand>
</feature>
<name>MSHB1_FRAAA</name>
<comment type="function">
    <text evidence="1">Catalyzes the deacetylation of 1D-myo-inositol 2-acetamido-2-deoxy-alpha-D-glucopyranoside (GlcNAc-Ins) in the mycothiol biosynthesis pathway.</text>
</comment>
<comment type="catalytic activity">
    <reaction evidence="1">
        <text>1D-myo-inositol 2-acetamido-2-deoxy-alpha-D-glucopyranoside + H2O = 1D-myo-inositol 2-amino-2-deoxy-alpha-D-glucopyranoside + acetate</text>
        <dbReference type="Rhea" id="RHEA:26180"/>
        <dbReference type="ChEBI" id="CHEBI:15377"/>
        <dbReference type="ChEBI" id="CHEBI:30089"/>
        <dbReference type="ChEBI" id="CHEBI:52442"/>
        <dbReference type="ChEBI" id="CHEBI:58886"/>
        <dbReference type="EC" id="3.5.1.103"/>
    </reaction>
</comment>
<comment type="cofactor">
    <cofactor evidence="1">
        <name>Zn(2+)</name>
        <dbReference type="ChEBI" id="CHEBI:29105"/>
    </cofactor>
    <text evidence="1">Binds 1 zinc ion per subunit.</text>
</comment>
<comment type="similarity">
    <text evidence="1">Belongs to the MshB deacetylase family.</text>
</comment>
<dbReference type="EC" id="3.5.1.103" evidence="1"/>
<dbReference type="EMBL" id="CT573213">
    <property type="protein sequence ID" value="CAJ61819.1"/>
    <property type="molecule type" value="Genomic_DNA"/>
</dbReference>
<dbReference type="SMR" id="Q0RKY6"/>
<dbReference type="STRING" id="326424.FRAAL3175"/>
<dbReference type="KEGG" id="fal:FRAAL3175"/>
<dbReference type="eggNOG" id="COG2120">
    <property type="taxonomic scope" value="Bacteria"/>
</dbReference>
<dbReference type="HOGENOM" id="CLU_049311_2_1_11"/>
<dbReference type="OrthoDB" id="158614at2"/>
<dbReference type="Proteomes" id="UP000000657">
    <property type="component" value="Chromosome"/>
</dbReference>
<dbReference type="GO" id="GO:0035595">
    <property type="term" value="F:N-acetylglucosaminylinositol deacetylase activity"/>
    <property type="evidence" value="ECO:0007669"/>
    <property type="project" value="UniProtKB-EC"/>
</dbReference>
<dbReference type="GO" id="GO:0008270">
    <property type="term" value="F:zinc ion binding"/>
    <property type="evidence" value="ECO:0007669"/>
    <property type="project" value="UniProtKB-UniRule"/>
</dbReference>
<dbReference type="GO" id="GO:0010125">
    <property type="term" value="P:mycothiol biosynthetic process"/>
    <property type="evidence" value="ECO:0007669"/>
    <property type="project" value="UniProtKB-UniRule"/>
</dbReference>
<dbReference type="Gene3D" id="3.40.50.10320">
    <property type="entry name" value="LmbE-like"/>
    <property type="match status" value="1"/>
</dbReference>
<dbReference type="HAMAP" id="MF_01696">
    <property type="entry name" value="MshB"/>
    <property type="match status" value="1"/>
</dbReference>
<dbReference type="InterPro" id="IPR003737">
    <property type="entry name" value="GlcNAc_PI_deacetylase-related"/>
</dbReference>
<dbReference type="InterPro" id="IPR024078">
    <property type="entry name" value="LmbE-like_dom_sf"/>
</dbReference>
<dbReference type="InterPro" id="IPR017810">
    <property type="entry name" value="Mycothiol_biosynthesis_MshB"/>
</dbReference>
<dbReference type="NCBIfam" id="TIGR03445">
    <property type="entry name" value="mycothiol_MshB"/>
    <property type="match status" value="1"/>
</dbReference>
<dbReference type="PANTHER" id="PTHR12993:SF26">
    <property type="entry name" value="1D-MYO-INOSITOL 2-ACETAMIDO-2-DEOXY-ALPHA-D-GLUCOPYRANOSIDE DEACETYLASE"/>
    <property type="match status" value="1"/>
</dbReference>
<dbReference type="PANTHER" id="PTHR12993">
    <property type="entry name" value="N-ACETYLGLUCOSAMINYL-PHOSPHATIDYLINOSITOL DE-N-ACETYLASE-RELATED"/>
    <property type="match status" value="1"/>
</dbReference>
<dbReference type="Pfam" id="PF02585">
    <property type="entry name" value="PIG-L"/>
    <property type="match status" value="1"/>
</dbReference>
<dbReference type="SUPFAM" id="SSF102588">
    <property type="entry name" value="LmbE-like"/>
    <property type="match status" value="1"/>
</dbReference>
<sequence length="289" mass="31209">MHAHPDDEVIATGATMAHYAADRDTRVVLVTCTLGEMGEVLIPELINLRADHADQLGGYRIGELERACAALGVTDHRFLGGAGRWRDSGMMSSPSNADPRSFWRADLTAASEALVRIVREVRPQVMVTYDAIGDYGHPDHIRAHDVTVRAFDDAADPDFAPQAGEPWQVSKLYETALSRAAVDAAVDQLWRSDLAKTAPEGISMPSDMLLSVPDAKVTTRIEAPDFFAAKVEAMRAHRTQMTVDGFFFALVNGDGQAARATEHYVLARGTPGPPAASGKEDDLFAGLVP</sequence>
<accession>Q0RKY6</accession>
<reference key="1">
    <citation type="journal article" date="2007" name="Genome Res.">
        <title>Genome characteristics of facultatively symbiotic Frankia sp. strains reflect host range and host plant biogeography.</title>
        <authorList>
            <person name="Normand P."/>
            <person name="Lapierre P."/>
            <person name="Tisa L.S."/>
            <person name="Gogarten J.P."/>
            <person name="Alloisio N."/>
            <person name="Bagnarol E."/>
            <person name="Bassi C.A."/>
            <person name="Berry A.M."/>
            <person name="Bickhart D.M."/>
            <person name="Choisne N."/>
            <person name="Couloux A."/>
            <person name="Cournoyer B."/>
            <person name="Cruveiller S."/>
            <person name="Daubin V."/>
            <person name="Demange N."/>
            <person name="Francino M.P."/>
            <person name="Goltsman E."/>
            <person name="Huang Y."/>
            <person name="Kopp O.R."/>
            <person name="Labarre L."/>
            <person name="Lapidus A."/>
            <person name="Lavire C."/>
            <person name="Marechal J."/>
            <person name="Martinez M."/>
            <person name="Mastronunzio J.E."/>
            <person name="Mullin B.C."/>
            <person name="Niemann J."/>
            <person name="Pujic P."/>
            <person name="Rawnsley T."/>
            <person name="Rouy Z."/>
            <person name="Schenowitz C."/>
            <person name="Sellstedt A."/>
            <person name="Tavares F."/>
            <person name="Tomkins J.P."/>
            <person name="Vallenet D."/>
            <person name="Valverde C."/>
            <person name="Wall L.G."/>
            <person name="Wang Y."/>
            <person name="Medigue C."/>
            <person name="Benson D.R."/>
        </authorList>
    </citation>
    <scope>NUCLEOTIDE SEQUENCE [LARGE SCALE GENOMIC DNA]</scope>
    <source>
        <strain>DSM 45986 / CECT 9034 / ACN14a</strain>
    </source>
</reference>
<proteinExistence type="inferred from homology"/>
<protein>
    <recommendedName>
        <fullName evidence="1">1D-myo-inositol 2-acetamido-2-deoxy-alpha-D-glucopyranoside deacetylase 1</fullName>
        <shortName evidence="1">GlcNAc-Ins deacetylase 1</shortName>
        <ecNumber evidence="1">3.5.1.103</ecNumber>
    </recommendedName>
    <alternativeName>
        <fullName>N-acetyl-1-D-myo-inositol 2-amino-2-deoxy-alpha-D-glucopyranoside deacetylase 1</fullName>
    </alternativeName>
</protein>
<organism>
    <name type="scientific">Frankia alni (strain DSM 45986 / CECT 9034 / ACN14a)</name>
    <dbReference type="NCBI Taxonomy" id="326424"/>
    <lineage>
        <taxon>Bacteria</taxon>
        <taxon>Bacillati</taxon>
        <taxon>Actinomycetota</taxon>
        <taxon>Actinomycetes</taxon>
        <taxon>Frankiales</taxon>
        <taxon>Frankiaceae</taxon>
        <taxon>Frankia</taxon>
    </lineage>
</organism>
<keyword id="KW-0378">Hydrolase</keyword>
<keyword id="KW-0479">Metal-binding</keyword>
<keyword id="KW-1185">Reference proteome</keyword>
<keyword id="KW-0862">Zinc</keyword>
<evidence type="ECO:0000255" key="1">
    <source>
        <dbReference type="HAMAP-Rule" id="MF_01696"/>
    </source>
</evidence>
<gene>
    <name evidence="1" type="primary">mshB1</name>
    <name type="ordered locus">FRAAL3175</name>
</gene>